<sequence>MTTIDLNCNLGESFGAYKMGNDDEILPFVSSINVACGFHAGDPSVMRQTVEKAMQHNVAIGAHPGFPDLIGFGRRNMNVSANEVYDYVLYQIGALDAFVKAAGGKMQHVKPHGALYNMAATNPEIADAIAKAIYHMNSSLSLYGLANSEAFIQAAEKYNITLVQEAFADRTYKEDGTLTSRTEENALIKNEDEAIKQVLQMVKEGYVNSVNGEKVAVQAQTICLHGDGEKAVQFARKIYRTFEHNKISICAPK</sequence>
<reference key="1">
    <citation type="journal article" date="2003" name="Nature">
        <title>The genome sequence of Bacillus anthracis Ames and comparison to closely related bacteria.</title>
        <authorList>
            <person name="Read T.D."/>
            <person name="Peterson S.N."/>
            <person name="Tourasse N.J."/>
            <person name="Baillie L.W."/>
            <person name="Paulsen I.T."/>
            <person name="Nelson K.E."/>
            <person name="Tettelin H."/>
            <person name="Fouts D.E."/>
            <person name="Eisen J.A."/>
            <person name="Gill S.R."/>
            <person name="Holtzapple E.K."/>
            <person name="Okstad O.A."/>
            <person name="Helgason E."/>
            <person name="Rilstone J."/>
            <person name="Wu M."/>
            <person name="Kolonay J.F."/>
            <person name="Beanan M.J."/>
            <person name="Dodson R.J."/>
            <person name="Brinkac L.M."/>
            <person name="Gwinn M.L."/>
            <person name="DeBoy R.T."/>
            <person name="Madpu R."/>
            <person name="Daugherty S.C."/>
            <person name="Durkin A.S."/>
            <person name="Haft D.H."/>
            <person name="Nelson W.C."/>
            <person name="Peterson J.D."/>
            <person name="Pop M."/>
            <person name="Khouri H.M."/>
            <person name="Radune D."/>
            <person name="Benton J.L."/>
            <person name="Mahamoud Y."/>
            <person name="Jiang L."/>
            <person name="Hance I.R."/>
            <person name="Weidman J.F."/>
            <person name="Berry K.J."/>
            <person name="Plaut R.D."/>
            <person name="Wolf A.M."/>
            <person name="Watkins K.L."/>
            <person name="Nierman W.C."/>
            <person name="Hazen A."/>
            <person name="Cline R.T."/>
            <person name="Redmond C."/>
            <person name="Thwaite J.E."/>
            <person name="White O."/>
            <person name="Salzberg S.L."/>
            <person name="Thomason B."/>
            <person name="Friedlander A.M."/>
            <person name="Koehler T.M."/>
            <person name="Hanna P.C."/>
            <person name="Kolstoe A.-B."/>
            <person name="Fraser C.M."/>
        </authorList>
    </citation>
    <scope>NUCLEOTIDE SEQUENCE [LARGE SCALE GENOMIC DNA]</scope>
    <source>
        <strain>Ames / isolate Porton</strain>
    </source>
</reference>
<reference key="2">
    <citation type="journal article" date="2009" name="J. Bacteriol.">
        <title>The complete genome sequence of Bacillus anthracis Ames 'Ancestor'.</title>
        <authorList>
            <person name="Ravel J."/>
            <person name="Jiang L."/>
            <person name="Stanley S.T."/>
            <person name="Wilson M.R."/>
            <person name="Decker R.S."/>
            <person name="Read T.D."/>
            <person name="Worsham P."/>
            <person name="Keim P.S."/>
            <person name="Salzberg S.L."/>
            <person name="Fraser-Liggett C.M."/>
            <person name="Rasko D.A."/>
        </authorList>
    </citation>
    <scope>NUCLEOTIDE SEQUENCE [LARGE SCALE GENOMIC DNA]</scope>
    <source>
        <strain>Ames ancestor</strain>
    </source>
</reference>
<reference key="3">
    <citation type="submission" date="2004-01" db="EMBL/GenBank/DDBJ databases">
        <title>Complete genome sequence of Bacillus anthracis Sterne.</title>
        <authorList>
            <person name="Brettin T.S."/>
            <person name="Bruce D."/>
            <person name="Challacombe J.F."/>
            <person name="Gilna P."/>
            <person name="Han C."/>
            <person name="Hill K."/>
            <person name="Hitchcock P."/>
            <person name="Jackson P."/>
            <person name="Keim P."/>
            <person name="Longmire J."/>
            <person name="Lucas S."/>
            <person name="Okinaka R."/>
            <person name="Richardson P."/>
            <person name="Rubin E."/>
            <person name="Tice H."/>
        </authorList>
    </citation>
    <scope>NUCLEOTIDE SEQUENCE [LARGE SCALE GENOMIC DNA]</scope>
    <source>
        <strain>Sterne</strain>
    </source>
</reference>
<accession>Q81NT0</accession>
<accession>Q6HX00</accession>
<accession>Q6KR32</accession>
<dbReference type="EC" id="3.5.2.9" evidence="1"/>
<dbReference type="EMBL" id="AE016879">
    <property type="protein sequence ID" value="AAP26908.1"/>
    <property type="molecule type" value="Genomic_DNA"/>
</dbReference>
<dbReference type="EMBL" id="AE017334">
    <property type="protein sequence ID" value="AAT32212.1"/>
    <property type="molecule type" value="Genomic_DNA"/>
</dbReference>
<dbReference type="EMBL" id="AE017225">
    <property type="protein sequence ID" value="AAT55189.1"/>
    <property type="molecule type" value="Genomic_DNA"/>
</dbReference>
<dbReference type="RefSeq" id="NP_845422.1">
    <property type="nucleotide sequence ID" value="NC_003997.3"/>
</dbReference>
<dbReference type="RefSeq" id="WP_000207358.1">
    <property type="nucleotide sequence ID" value="NZ_WXXJ01000001.1"/>
</dbReference>
<dbReference type="RefSeq" id="YP_029138.1">
    <property type="nucleotide sequence ID" value="NC_005945.1"/>
</dbReference>
<dbReference type="SMR" id="Q81NT0"/>
<dbReference type="IntAct" id="Q81NT0">
    <property type="interactions" value="3"/>
</dbReference>
<dbReference type="STRING" id="261594.GBAA_3095"/>
<dbReference type="DNASU" id="1087399"/>
<dbReference type="GeneID" id="45022898"/>
<dbReference type="KEGG" id="ban:BA_3095"/>
<dbReference type="KEGG" id="bar:GBAA_3095"/>
<dbReference type="KEGG" id="bat:BAS2880"/>
<dbReference type="PATRIC" id="fig|198094.11.peg.3077"/>
<dbReference type="eggNOG" id="COG1540">
    <property type="taxonomic scope" value="Bacteria"/>
</dbReference>
<dbReference type="HOGENOM" id="CLU_069535_0_0_9"/>
<dbReference type="OMA" id="VCIHGDT"/>
<dbReference type="OrthoDB" id="9773478at2"/>
<dbReference type="Proteomes" id="UP000000427">
    <property type="component" value="Chromosome"/>
</dbReference>
<dbReference type="Proteomes" id="UP000000594">
    <property type="component" value="Chromosome"/>
</dbReference>
<dbReference type="GO" id="GO:0017168">
    <property type="term" value="F:5-oxoprolinase (ATP-hydrolyzing) activity"/>
    <property type="evidence" value="ECO:0007669"/>
    <property type="project" value="UniProtKB-UniRule"/>
</dbReference>
<dbReference type="GO" id="GO:0005524">
    <property type="term" value="F:ATP binding"/>
    <property type="evidence" value="ECO:0007669"/>
    <property type="project" value="UniProtKB-UniRule"/>
</dbReference>
<dbReference type="GO" id="GO:0005975">
    <property type="term" value="P:carbohydrate metabolic process"/>
    <property type="evidence" value="ECO:0007669"/>
    <property type="project" value="InterPro"/>
</dbReference>
<dbReference type="CDD" id="cd10787">
    <property type="entry name" value="LamB_YcsF_like"/>
    <property type="match status" value="1"/>
</dbReference>
<dbReference type="Gene3D" id="3.20.20.370">
    <property type="entry name" value="Glycoside hydrolase/deacetylase"/>
    <property type="match status" value="1"/>
</dbReference>
<dbReference type="HAMAP" id="MF_00691">
    <property type="entry name" value="PxpA"/>
    <property type="match status" value="1"/>
</dbReference>
<dbReference type="InterPro" id="IPR011330">
    <property type="entry name" value="Glyco_hydro/deAcase_b/a-brl"/>
</dbReference>
<dbReference type="InterPro" id="IPR005501">
    <property type="entry name" value="LamB/YcsF/PxpA-like"/>
</dbReference>
<dbReference type="NCBIfam" id="NF003813">
    <property type="entry name" value="PRK05406.1-2"/>
    <property type="match status" value="1"/>
</dbReference>
<dbReference type="NCBIfam" id="NF003814">
    <property type="entry name" value="PRK05406.1-3"/>
    <property type="match status" value="1"/>
</dbReference>
<dbReference type="NCBIfam" id="NF003816">
    <property type="entry name" value="PRK05406.1-5"/>
    <property type="match status" value="1"/>
</dbReference>
<dbReference type="PANTHER" id="PTHR30292:SF0">
    <property type="entry name" value="5-OXOPROLINASE SUBUNIT A"/>
    <property type="match status" value="1"/>
</dbReference>
<dbReference type="PANTHER" id="PTHR30292">
    <property type="entry name" value="UNCHARACTERIZED PROTEIN YBGL-RELATED"/>
    <property type="match status" value="1"/>
</dbReference>
<dbReference type="Pfam" id="PF03746">
    <property type="entry name" value="LamB_YcsF"/>
    <property type="match status" value="1"/>
</dbReference>
<dbReference type="SUPFAM" id="SSF88713">
    <property type="entry name" value="Glycoside hydrolase/deacetylase"/>
    <property type="match status" value="1"/>
</dbReference>
<protein>
    <recommendedName>
        <fullName evidence="1">5-oxoprolinase subunit A</fullName>
        <shortName evidence="1">5-OPase subunit A</shortName>
        <ecNumber evidence="1">3.5.2.9</ecNumber>
    </recommendedName>
    <alternativeName>
        <fullName evidence="1">5-oxoprolinase (ATP-hydrolyzing) subunit A</fullName>
    </alternativeName>
</protein>
<evidence type="ECO:0000255" key="1">
    <source>
        <dbReference type="HAMAP-Rule" id="MF_00691"/>
    </source>
</evidence>
<proteinExistence type="inferred from homology"/>
<comment type="function">
    <text evidence="1">Catalyzes the cleavage of 5-oxoproline to form L-glutamate coupled to the hydrolysis of ATP to ADP and inorganic phosphate.</text>
</comment>
<comment type="catalytic activity">
    <reaction evidence="1">
        <text>5-oxo-L-proline + ATP + 2 H2O = L-glutamate + ADP + phosphate + H(+)</text>
        <dbReference type="Rhea" id="RHEA:10348"/>
        <dbReference type="ChEBI" id="CHEBI:15377"/>
        <dbReference type="ChEBI" id="CHEBI:15378"/>
        <dbReference type="ChEBI" id="CHEBI:29985"/>
        <dbReference type="ChEBI" id="CHEBI:30616"/>
        <dbReference type="ChEBI" id="CHEBI:43474"/>
        <dbReference type="ChEBI" id="CHEBI:58402"/>
        <dbReference type="ChEBI" id="CHEBI:456216"/>
        <dbReference type="EC" id="3.5.2.9"/>
    </reaction>
</comment>
<comment type="subunit">
    <text evidence="1">Forms a complex composed of PxpA, PxpB and PxpC.</text>
</comment>
<comment type="similarity">
    <text evidence="1">Belongs to the LamB/PxpA family.</text>
</comment>
<feature type="chain" id="PRO_0000184982" description="5-oxoprolinase subunit A">
    <location>
        <begin position="1"/>
        <end position="253"/>
    </location>
</feature>
<organism>
    <name type="scientific">Bacillus anthracis</name>
    <dbReference type="NCBI Taxonomy" id="1392"/>
    <lineage>
        <taxon>Bacteria</taxon>
        <taxon>Bacillati</taxon>
        <taxon>Bacillota</taxon>
        <taxon>Bacilli</taxon>
        <taxon>Bacillales</taxon>
        <taxon>Bacillaceae</taxon>
        <taxon>Bacillus</taxon>
        <taxon>Bacillus cereus group</taxon>
    </lineage>
</organism>
<gene>
    <name evidence="1" type="primary">pxpA</name>
    <name type="ordered locus">BA_3095</name>
    <name type="ordered locus">GBAA_3095</name>
    <name type="ordered locus">BAS2880</name>
</gene>
<keyword id="KW-0067">ATP-binding</keyword>
<keyword id="KW-0378">Hydrolase</keyword>
<keyword id="KW-0547">Nucleotide-binding</keyword>
<keyword id="KW-1185">Reference proteome</keyword>
<name>PXPA_BACAN</name>